<gene>
    <name evidence="1" type="primary">plsX</name>
    <name type="ordered locus">CV_3417</name>
</gene>
<sequence>MTITVAVDAMGGDVGLKVTVPASIQFLQDHPDTHLILVGDQPALEAELALHDGAVRERILIQHATQVVGMDEAPQLALKNKKDSSMRVAINLVKEGKAQAAVSAGNTGALMATARFVLKTIPGIDRPAIAKLLPNVKGTSCVLDLGANVDCTPEQLLQFGIMGSELMACLQGKANPSVGLLNIGSEDIKGNDNIKKTAELLRQSELHFYGNVEGDDICKGTTDVVVCDGFTGNVALKTAEGLAHMFAVFLREEFGRSWWTRLCALAALPVLALFKKRIDPRRYNGASLLGLRGIVVKSHGSADVTGFRYALAQACEEAGSDVIAHIADRVAKQLDNLKQSEAEAN</sequence>
<accession>Q7NSK6</accession>
<evidence type="ECO:0000255" key="1">
    <source>
        <dbReference type="HAMAP-Rule" id="MF_00019"/>
    </source>
</evidence>
<proteinExistence type="inferred from homology"/>
<protein>
    <recommendedName>
        <fullName evidence="1">Phosphate acyltransferase</fullName>
        <ecNumber evidence="1">2.3.1.274</ecNumber>
    </recommendedName>
    <alternativeName>
        <fullName evidence="1">Acyl-ACP phosphotransacylase</fullName>
    </alternativeName>
    <alternativeName>
        <fullName evidence="1">Acyl-[acyl-carrier-protein]--phosphate acyltransferase</fullName>
    </alternativeName>
    <alternativeName>
        <fullName evidence="1">Phosphate-acyl-ACP acyltransferase</fullName>
    </alternativeName>
</protein>
<name>PLSX_CHRVO</name>
<comment type="function">
    <text evidence="1">Catalyzes the reversible formation of acyl-phosphate (acyl-PO(4)) from acyl-[acyl-carrier-protein] (acyl-ACP). This enzyme utilizes acyl-ACP as fatty acyl donor, but not acyl-CoA.</text>
</comment>
<comment type="catalytic activity">
    <reaction evidence="1">
        <text>a fatty acyl-[ACP] + phosphate = an acyl phosphate + holo-[ACP]</text>
        <dbReference type="Rhea" id="RHEA:42292"/>
        <dbReference type="Rhea" id="RHEA-COMP:9685"/>
        <dbReference type="Rhea" id="RHEA-COMP:14125"/>
        <dbReference type="ChEBI" id="CHEBI:43474"/>
        <dbReference type="ChEBI" id="CHEBI:59918"/>
        <dbReference type="ChEBI" id="CHEBI:64479"/>
        <dbReference type="ChEBI" id="CHEBI:138651"/>
        <dbReference type="EC" id="2.3.1.274"/>
    </reaction>
</comment>
<comment type="pathway">
    <text evidence="1">Lipid metabolism; phospholipid metabolism.</text>
</comment>
<comment type="subunit">
    <text evidence="1">Homodimer. Probably interacts with PlsY.</text>
</comment>
<comment type="subcellular location">
    <subcellularLocation>
        <location evidence="1">Cytoplasm</location>
    </subcellularLocation>
    <text evidence="1">Associated with the membrane possibly through PlsY.</text>
</comment>
<comment type="similarity">
    <text evidence="1">Belongs to the PlsX family.</text>
</comment>
<dbReference type="EC" id="2.3.1.274" evidence="1"/>
<dbReference type="EMBL" id="AE016825">
    <property type="protein sequence ID" value="AAQ61081.2"/>
    <property type="molecule type" value="Genomic_DNA"/>
</dbReference>
<dbReference type="RefSeq" id="WP_011136964.1">
    <property type="nucleotide sequence ID" value="NC_005085.1"/>
</dbReference>
<dbReference type="SMR" id="Q7NSK6"/>
<dbReference type="STRING" id="243365.CV_3417"/>
<dbReference type="KEGG" id="cvi:CV_3417"/>
<dbReference type="eggNOG" id="COG0416">
    <property type="taxonomic scope" value="Bacteria"/>
</dbReference>
<dbReference type="HOGENOM" id="CLU_039379_1_0_4"/>
<dbReference type="OrthoDB" id="9806408at2"/>
<dbReference type="UniPathway" id="UPA00085"/>
<dbReference type="Proteomes" id="UP000001424">
    <property type="component" value="Chromosome"/>
</dbReference>
<dbReference type="GO" id="GO:0005737">
    <property type="term" value="C:cytoplasm"/>
    <property type="evidence" value="ECO:0007669"/>
    <property type="project" value="UniProtKB-SubCell"/>
</dbReference>
<dbReference type="GO" id="GO:0043811">
    <property type="term" value="F:phosphate:acyl-[acyl carrier protein] acyltransferase activity"/>
    <property type="evidence" value="ECO:0007669"/>
    <property type="project" value="UniProtKB-UniRule"/>
</dbReference>
<dbReference type="GO" id="GO:0006633">
    <property type="term" value="P:fatty acid biosynthetic process"/>
    <property type="evidence" value="ECO:0007669"/>
    <property type="project" value="UniProtKB-UniRule"/>
</dbReference>
<dbReference type="GO" id="GO:0008654">
    <property type="term" value="P:phospholipid biosynthetic process"/>
    <property type="evidence" value="ECO:0007669"/>
    <property type="project" value="UniProtKB-KW"/>
</dbReference>
<dbReference type="Gene3D" id="3.40.718.10">
    <property type="entry name" value="Isopropylmalate Dehydrogenase"/>
    <property type="match status" value="1"/>
</dbReference>
<dbReference type="HAMAP" id="MF_00019">
    <property type="entry name" value="PlsX"/>
    <property type="match status" value="1"/>
</dbReference>
<dbReference type="InterPro" id="IPR003664">
    <property type="entry name" value="FA_synthesis"/>
</dbReference>
<dbReference type="InterPro" id="IPR012281">
    <property type="entry name" value="Phospholipid_synth_PlsX-like"/>
</dbReference>
<dbReference type="NCBIfam" id="TIGR00182">
    <property type="entry name" value="plsX"/>
    <property type="match status" value="1"/>
</dbReference>
<dbReference type="PANTHER" id="PTHR30100">
    <property type="entry name" value="FATTY ACID/PHOSPHOLIPID SYNTHESIS PROTEIN PLSX"/>
    <property type="match status" value="1"/>
</dbReference>
<dbReference type="PANTHER" id="PTHR30100:SF1">
    <property type="entry name" value="PHOSPHATE ACYLTRANSFERASE"/>
    <property type="match status" value="1"/>
</dbReference>
<dbReference type="Pfam" id="PF02504">
    <property type="entry name" value="FA_synthesis"/>
    <property type="match status" value="1"/>
</dbReference>
<dbReference type="PIRSF" id="PIRSF002465">
    <property type="entry name" value="Phsphlp_syn_PlsX"/>
    <property type="match status" value="1"/>
</dbReference>
<dbReference type="SUPFAM" id="SSF53659">
    <property type="entry name" value="Isocitrate/Isopropylmalate dehydrogenase-like"/>
    <property type="match status" value="1"/>
</dbReference>
<reference key="1">
    <citation type="journal article" date="2003" name="Proc. Natl. Acad. Sci. U.S.A.">
        <title>The complete genome sequence of Chromobacterium violaceum reveals remarkable and exploitable bacterial adaptability.</title>
        <authorList>
            <person name="Vasconcelos A.T.R."/>
            <person name="de Almeida D.F."/>
            <person name="Hungria M."/>
            <person name="Guimaraes C.T."/>
            <person name="Antonio R.V."/>
            <person name="Almeida F.C."/>
            <person name="de Almeida L.G.P."/>
            <person name="de Almeida R."/>
            <person name="Alves-Gomes J.A."/>
            <person name="Andrade E.M."/>
            <person name="Araripe J."/>
            <person name="de Araujo M.F.F."/>
            <person name="Astolfi-Filho S."/>
            <person name="Azevedo V."/>
            <person name="Baptista A.J."/>
            <person name="Bataus L.A.M."/>
            <person name="Batista J.S."/>
            <person name="Belo A."/>
            <person name="van den Berg C."/>
            <person name="Bogo M."/>
            <person name="Bonatto S."/>
            <person name="Bordignon J."/>
            <person name="Brigido M.M."/>
            <person name="Brito C.A."/>
            <person name="Brocchi M."/>
            <person name="Burity H.A."/>
            <person name="Camargo A.A."/>
            <person name="Cardoso D.D.P."/>
            <person name="Carneiro N.P."/>
            <person name="Carraro D.M."/>
            <person name="Carvalho C.M.B."/>
            <person name="Cascardo J.C.M."/>
            <person name="Cavada B.S."/>
            <person name="Chueire L.M.O."/>
            <person name="Creczynski-Pasa T.B."/>
            <person name="Cunha-Junior N.C."/>
            <person name="Fagundes N."/>
            <person name="Falcao C.L."/>
            <person name="Fantinatti F."/>
            <person name="Farias I.P."/>
            <person name="Felipe M.S.S."/>
            <person name="Ferrari L.P."/>
            <person name="Ferro J.A."/>
            <person name="Ferro M.I.T."/>
            <person name="Franco G.R."/>
            <person name="Freitas N.S.A."/>
            <person name="Furlan L.R."/>
            <person name="Gazzinelli R.T."/>
            <person name="Gomes E.A."/>
            <person name="Goncalves P.R."/>
            <person name="Grangeiro T.B."/>
            <person name="Grattapaglia D."/>
            <person name="Grisard E.C."/>
            <person name="Hanna E.S."/>
            <person name="Jardim S.N."/>
            <person name="Laurino J."/>
            <person name="Leoi L.C.T."/>
            <person name="Lima L.F.A."/>
            <person name="Loureiro M.F."/>
            <person name="Lyra M.C.C.P."/>
            <person name="Madeira H.M.F."/>
            <person name="Manfio G.P."/>
            <person name="Maranhao A.Q."/>
            <person name="Martins W.S."/>
            <person name="di Mauro S.M.Z."/>
            <person name="de Medeiros S.R.B."/>
            <person name="Meissner R.V."/>
            <person name="Moreira M.A.M."/>
            <person name="Nascimento F.F."/>
            <person name="Nicolas M.F."/>
            <person name="Oliveira J.G."/>
            <person name="Oliveira S.C."/>
            <person name="Paixao R.F.C."/>
            <person name="Parente J.A."/>
            <person name="Pedrosa F.O."/>
            <person name="Pena S.D.J."/>
            <person name="Pereira J.O."/>
            <person name="Pereira M."/>
            <person name="Pinto L.S.R.C."/>
            <person name="Pinto L.S."/>
            <person name="Porto J.I.R."/>
            <person name="Potrich D.P."/>
            <person name="Ramalho-Neto C.E."/>
            <person name="Reis A.M.M."/>
            <person name="Rigo L.U."/>
            <person name="Rondinelli E."/>
            <person name="Santos E.B.P."/>
            <person name="Santos F.R."/>
            <person name="Schneider M.P.C."/>
            <person name="Seuanez H.N."/>
            <person name="Silva A.M.R."/>
            <person name="da Silva A.L.C."/>
            <person name="Silva D.W."/>
            <person name="Silva R."/>
            <person name="Simoes I.C."/>
            <person name="Simon D."/>
            <person name="Soares C.M.A."/>
            <person name="Soares R.B.A."/>
            <person name="Souza E.M."/>
            <person name="Souza K.R.L."/>
            <person name="Souza R.C."/>
            <person name="Steffens M.B.R."/>
            <person name="Steindel M."/>
            <person name="Teixeira S.R."/>
            <person name="Urmenyi T."/>
            <person name="Vettore A."/>
            <person name="Wassem R."/>
            <person name="Zaha A."/>
            <person name="Simpson A.J.G."/>
        </authorList>
    </citation>
    <scope>NUCLEOTIDE SEQUENCE [LARGE SCALE GENOMIC DNA]</scope>
    <source>
        <strain>ATCC 12472 / DSM 30191 / JCM 1249 / CCUG 213 / NBRC 12614 / NCIMB 9131 / NCTC 9757 / MK</strain>
    </source>
</reference>
<keyword id="KW-0963">Cytoplasm</keyword>
<keyword id="KW-0444">Lipid biosynthesis</keyword>
<keyword id="KW-0443">Lipid metabolism</keyword>
<keyword id="KW-0594">Phospholipid biosynthesis</keyword>
<keyword id="KW-1208">Phospholipid metabolism</keyword>
<keyword id="KW-1185">Reference proteome</keyword>
<keyword id="KW-0808">Transferase</keyword>
<feature type="chain" id="PRO_0000189867" description="Phosphate acyltransferase">
    <location>
        <begin position="1"/>
        <end position="345"/>
    </location>
</feature>
<organism>
    <name type="scientific">Chromobacterium violaceum (strain ATCC 12472 / DSM 30191 / JCM 1249 / CCUG 213 / NBRC 12614 / NCIMB 9131 / NCTC 9757 / MK)</name>
    <dbReference type="NCBI Taxonomy" id="243365"/>
    <lineage>
        <taxon>Bacteria</taxon>
        <taxon>Pseudomonadati</taxon>
        <taxon>Pseudomonadota</taxon>
        <taxon>Betaproteobacteria</taxon>
        <taxon>Neisseriales</taxon>
        <taxon>Chromobacteriaceae</taxon>
        <taxon>Chromobacterium</taxon>
    </lineage>
</organism>